<accession>A0A7J6KE60</accession>
<keyword id="KW-0933">Apicoplast</keyword>
<keyword id="KW-0472">Membrane</keyword>
<keyword id="KW-0934">Plastid</keyword>
<keyword id="KW-0670">Pyruvate</keyword>
<keyword id="KW-1185">Reference proteome</keyword>
<keyword id="KW-0812">Transmembrane</keyword>
<keyword id="KW-1133">Transmembrane helix</keyword>
<keyword id="KW-0813">Transport</keyword>
<proteinExistence type="evidence at protein level"/>
<feature type="chain" id="PRO_0000461487" description="Apicoplast pyruvate carrier 2" evidence="1">
    <location>
        <begin position="1"/>
        <end position="652"/>
    </location>
</feature>
<feature type="topological domain" description="Cytoplasmic" evidence="3">
    <location>
        <begin position="1"/>
        <end position="45"/>
    </location>
</feature>
<feature type="transmembrane region" description="Helical" evidence="1">
    <location>
        <begin position="46"/>
        <end position="66"/>
    </location>
</feature>
<feature type="transmembrane region" description="Helical" evidence="1">
    <location>
        <begin position="126"/>
        <end position="146"/>
    </location>
</feature>
<feature type="transmembrane region" description="Helical" evidence="1">
    <location>
        <begin position="167"/>
        <end position="187"/>
    </location>
</feature>
<feature type="transmembrane region" description="Helical" evidence="1">
    <location>
        <begin position="189"/>
        <end position="209"/>
    </location>
</feature>
<feature type="transmembrane region" description="Helical" evidence="1">
    <location>
        <begin position="212"/>
        <end position="232"/>
    </location>
</feature>
<feature type="transmembrane region" description="Helical" evidence="1">
    <location>
        <begin position="278"/>
        <end position="298"/>
    </location>
</feature>
<feature type="transmembrane region" description="Helical" evidence="1">
    <location>
        <begin position="345"/>
        <end position="365"/>
    </location>
</feature>
<feature type="transmembrane region" description="Helical" evidence="1">
    <location>
        <begin position="385"/>
        <end position="405"/>
    </location>
</feature>
<feature type="transmembrane region" description="Helical" evidence="1">
    <location>
        <begin position="417"/>
        <end position="437"/>
    </location>
</feature>
<feature type="transmembrane region" description="Helical" evidence="1">
    <location>
        <begin position="445"/>
        <end position="465"/>
    </location>
</feature>
<feature type="transmembrane region" description="Helical" evidence="1">
    <location>
        <begin position="467"/>
        <end position="487"/>
    </location>
</feature>
<feature type="transmembrane region" description="Helical" evidence="1">
    <location>
        <begin position="515"/>
        <end position="535"/>
    </location>
</feature>
<feature type="topological domain" description="Cytoplasmic" evidence="3">
    <location>
        <begin position="536"/>
        <end position="652"/>
    </location>
</feature>
<feature type="region of interest" description="Disordered" evidence="2">
    <location>
        <begin position="1"/>
        <end position="53"/>
    </location>
</feature>
<reference evidence="7" key="1">
    <citation type="submission" date="2020-03" db="EMBL/GenBank/DDBJ databases">
        <title>Genome sequence of Toxoplasma gondii RH-88 strain.</title>
        <authorList>
            <person name="Lorenzi H.A."/>
            <person name="Venepally P."/>
            <person name="Rozenberg A."/>
            <person name="Sibley D."/>
        </authorList>
    </citation>
    <scope>NUCLEOTIDE SEQUENCE [LARGE SCALE GENOMIC DNA]</scope>
    <source>
        <strain evidence="7">RH-88</strain>
    </source>
</reference>
<reference evidence="5" key="2">
    <citation type="journal article" date="2024" name="Proc. Natl. Acad. Sci. U.S.A.">
        <title>A pyruvate transporter in the apicoplast of apicomplexan parasites.</title>
        <authorList>
            <person name="Chen P."/>
            <person name="Chen Y."/>
            <person name="Xia N."/>
            <person name="Fan B."/>
            <person name="Niu Z."/>
            <person name="He Z."/>
            <person name="Wang X."/>
            <person name="Yuan J."/>
            <person name="Gupta N."/>
            <person name="Shen B."/>
        </authorList>
    </citation>
    <scope>FUNCTION</scope>
    <scope>INTERACTION WITH APICOPLAST PYRUVATE CARRIER 1</scope>
    <scope>SUBCELLULAR LOCATION</scope>
    <scope>TOPOLOGY</scope>
</reference>
<name>TGPC2_TOXGO</name>
<protein>
    <recommendedName>
        <fullName evidence="4">Apicoplast pyruvate carrier 2</fullName>
        <shortName evidence="4">APC2</shortName>
    </recommendedName>
</protein>
<comment type="function">
    <text evidence="3">Along with apicoplast pyruvate carrier 1, forms apicoplast pyruvate carrier (APC) complex, which transports pyruvate into the apicoplast and may also transport amino acids like methionine, serine, glycine and tryptophan with low efficiency (PubMed:38865262). Required for maintaining pyruvate-dependent metabolic activities in the apicoplast, such as synthesis of fatty acids, isopentenyl pyrophosphate (IPP), dimethylallyl pyrophosphate (DMAPP) and methylerythritol 4-phosphate (MEP) (PubMed:38865262). Required for maintaining the integrity of the apicoplast (PubMed:38865262). Required for normal parasite growth (PubMed:38865262).</text>
</comment>
<comment type="subunit">
    <text evidence="3">Interacts with apicoplast pyruvate carrier 1.</text>
</comment>
<comment type="subcellular location">
    <subcellularLocation>
        <location evidence="3">Plastid</location>
        <location evidence="3">Apicoplast</location>
    </subcellularLocation>
    <subcellularLocation>
        <location evidence="3">Membrane</location>
        <topology evidence="1">Multi-pass membrane protein</topology>
    </subcellularLocation>
</comment>
<comment type="similarity">
    <text evidence="5">Belongs to the major facilitator superfamily.</text>
</comment>
<comment type="caution">
    <text evidence="3">When expressed individually, apicoplast pyruvate carrier 1 and 2 each demonstrate negligible pyruvate uptake; both proteins are necessary for pyruvate transport.</text>
</comment>
<evidence type="ECO:0000255" key="1"/>
<evidence type="ECO:0000256" key="2">
    <source>
        <dbReference type="SAM" id="MobiDB-lite"/>
    </source>
</evidence>
<evidence type="ECO:0000269" key="3">
    <source>
    </source>
</evidence>
<evidence type="ECO:0000303" key="4">
    <source>
    </source>
</evidence>
<evidence type="ECO:0000305" key="5"/>
<evidence type="ECO:0000312" key="6">
    <source>
        <dbReference type="EMBL" id="KAF4645723.1"/>
    </source>
</evidence>
<evidence type="ECO:0000312" key="7">
    <source>
        <dbReference type="Proteomes" id="UP000557509"/>
    </source>
</evidence>
<sequence length="652" mass="68777">MSAFPASPQPSAFPASPQPSAFPASPQPSASPVSPRHCVSPSSGTLPSSSSPSVSSCALRGLSSSSSALSRPPFSSFPASPAFSRRCMLTESEMGKTRSLKWLRFRCILGACLLHFCLGGSHTIGNLLPYLIGFIRNAQATSAVSYKDGLSIYAWAIICQGVGGFLGTTLEKKAGTKKTAFLGSAWMTLGLALCGVCTHDLSLFLIAYGVVTALGCGVAYPVPLAATLKLSPAEDKGWVSGLLFFARGLSVCILCPFQSFFLHQPPEVFLSLIPAPLLPYLSSVASDTASASRLSSLNGKRAAPLPSPGGERFLTDQAVLDRLPALFFVMAGVFACIQLLGVLLLVDPERTSAADEAAADAAERQKLLYEDPQGASRASAGRSSSCSASQVFASLVLTPQDICSSPSFWRLFLMLLLSWQSLFFVQLFWKVLPLYPEASLAASAAAPAPLDSLFASVVRRVPRALASASRPDPRALHAAADAWSLTGSSWSFANDFFLSCLGGLLGALCCFGRLLWGYIGGGIGYMRSTVVMNALTAPCLFALSTYALQSPQLYAACLALVHVCHGGIFSLFPSVTSDLFGHKNVGPVFSLLFAARLAAVALAAIWINIALTYGNLHMVVGALGVCHLVSIGTTFFFHPTDALPYRFPTYSP</sequence>
<organism evidence="7">
    <name type="scientific">Toxoplasma gondii</name>
    <dbReference type="NCBI Taxonomy" id="5811"/>
    <lineage>
        <taxon>Eukaryota</taxon>
        <taxon>Sar</taxon>
        <taxon>Alveolata</taxon>
        <taxon>Apicomplexa</taxon>
        <taxon>Conoidasida</taxon>
        <taxon>Coccidia</taxon>
        <taxon>Eucoccidiorida</taxon>
        <taxon>Eimeriorina</taxon>
        <taxon>Sarcocystidae</taxon>
        <taxon>Toxoplasma</taxon>
    </lineage>
</organism>
<gene>
    <name evidence="6" type="ORF">TGRH88_002090</name>
</gene>
<dbReference type="EMBL" id="JAAUHK010000187">
    <property type="protein sequence ID" value="KAF4645723.1"/>
    <property type="molecule type" value="Genomic_DNA"/>
</dbReference>
<dbReference type="VEuPathDB" id="ToxoDB:TGME49_297245"/>
<dbReference type="Proteomes" id="UP000557509">
    <property type="component" value="Unassembled WGS sequence"/>
</dbReference>
<dbReference type="GO" id="GO:0160211">
    <property type="term" value="C:apicoplast membrane"/>
    <property type="evidence" value="ECO:0000314"/>
    <property type="project" value="UniProtKB"/>
</dbReference>
<dbReference type="GO" id="GO:0003333">
    <property type="term" value="P:amino acid transmembrane transport"/>
    <property type="evidence" value="ECO:0000314"/>
    <property type="project" value="UniProtKB"/>
</dbReference>
<dbReference type="GO" id="GO:1901475">
    <property type="term" value="P:pyruvate transmembrane transport"/>
    <property type="evidence" value="ECO:0000314"/>
    <property type="project" value="UniProtKB"/>
</dbReference>
<dbReference type="Gene3D" id="1.20.1250.20">
    <property type="entry name" value="MFS general substrate transporter like domains"/>
    <property type="match status" value="2"/>
</dbReference>
<dbReference type="InterPro" id="IPR052983">
    <property type="entry name" value="MFS_Riboflavin_Transporter"/>
</dbReference>
<dbReference type="InterPro" id="IPR036259">
    <property type="entry name" value="MFS_trans_sf"/>
</dbReference>
<dbReference type="PANTHER" id="PTHR43385">
    <property type="entry name" value="RIBOFLAVIN TRANSPORTER RIBJ"/>
    <property type="match status" value="1"/>
</dbReference>
<dbReference type="PANTHER" id="PTHR43385:SF1">
    <property type="entry name" value="RIBOFLAVIN TRANSPORTER RIBJ"/>
    <property type="match status" value="1"/>
</dbReference>
<dbReference type="SUPFAM" id="SSF103473">
    <property type="entry name" value="MFS general substrate transporter"/>
    <property type="match status" value="1"/>
</dbReference>